<sequence length="590" mass="67130">MEELAVEVRGSNGAFYKAFVKDVHEDSITVTFENNWQQERQIPFHDVRFPPPSGYNKDINESDEVEVYSRANEKEPCCWWLAKVRMIKGEFYVIEYAACDATYNEIVTIERLRSVNPNKPATKNSFHKVKLDVPEDLRQMCAKDSAHKDFKKAVGAFSVSYDSENYQLVILSVNEVTIKRANMLSDMHFRSLRTKLSLMLRNEEASKQLESSRQLASRFHEQFIVREDLMGLAIGTHGANIQQARKVPGVTAIDLDEDTCTFHIYGEDQEAVKKARTYLEFAEDVIQVPRNLVGKVIGKNGKLIQEIVDKSGVVRVRIEAENDKNISPEEGMVPFVFVGTKDSITNATVLLDYHLNYLKEVDQLRLERLQIDEQLRQIGASSRPPPNRPDKEKGYQSEDLSGTGRGSRPYNNRGRSRRGTGYASDIRYGDPDYRKTTYPEYPRSQAFWIKGTNSEASNASETESDHRDELSDWSLAPAEDDRDNYHRRGDGRRRGGPRGQGMRGRGGFKGNDDQPRPDNRQRNSRETKARTSDGSLQIRIDCNNERSVHTKTLQNASVEGSRLRTGKDRVQKKEKSEVVDGPQVVVNGIP</sequence>
<accession>Q6GLC9</accession>
<comment type="function">
    <text evidence="2 3">Multifunctional polyribosome-associated RNA-binding protein that plays a central role in neuronal development and synaptic plasticity through the regulation of alternative mRNA splicing, mRNA stability, mRNA dendritic transport and postsynaptic local protein synthesis of target mRNAs. Acts as an mRNA regulator by mediating formation of some phase-separated membraneless compartment: undergoes liquid-liquid phase separation upon binding to target mRNAs, leading to assemble mRNAs into cytoplasmic ribonucleoprotein granules that concentrate mRNAs with associated regulatory factors (By similarity). Binds poly(G) and poly(U), and to a lower extent poly(A) and poly(C) (By similarity). Forms a cytoplasmic messenger ribonucleoprotein (mRNP) network by packaging long mRNAs, serving as a scaffold that recruits proteins and signaling molecules. This network facilitates signaling reactions by maintaining proximity between kinases and substrates (By similarity).</text>
</comment>
<comment type="subunit">
    <text evidence="3">Homodimer. Heterodimer.</text>
</comment>
<comment type="subcellular location">
    <subcellularLocation>
        <location evidence="3">Nucleus</location>
    </subcellularLocation>
    <subcellularLocation>
        <location evidence="3">Nucleus</location>
        <location evidence="3">Nucleolus</location>
    </subcellularLocation>
    <subcellularLocation>
        <location evidence="1">Chromosome</location>
        <location evidence="1">Centromere</location>
    </subcellularLocation>
    <subcellularLocation>
        <location evidence="1">Chromosome</location>
    </subcellularLocation>
    <subcellularLocation>
        <location evidence="3">Cytoplasm</location>
        <location evidence="3">Perinuclear region</location>
    </subcellularLocation>
    <subcellularLocation>
        <location evidence="3">Cytoplasm</location>
        <location evidence="3">Cytoplasmic ribonucleoprotein granule</location>
    </subcellularLocation>
    <subcellularLocation>
        <location evidence="3">Perikaryon</location>
    </subcellularLocation>
    <subcellularLocation>
        <location evidence="3">Cell projection</location>
        <location evidence="3">Neuron projection</location>
    </subcellularLocation>
    <subcellularLocation>
        <location evidence="1">Cell projection</location>
        <location evidence="1">Axon</location>
    </subcellularLocation>
    <subcellularLocation>
        <location evidence="1">Cell projection</location>
        <location evidence="1">Dendrite</location>
    </subcellularLocation>
    <subcellularLocation>
        <location evidence="1">Cell projection</location>
        <location evidence="1">Dendritic spine</location>
    </subcellularLocation>
    <subcellularLocation>
        <location evidence="1">Synapse</location>
        <location evidence="1">Synaptosome</location>
    </subcellularLocation>
    <subcellularLocation>
        <location evidence="3">Cell projection</location>
        <location evidence="3">Growth cone</location>
    </subcellularLocation>
    <subcellularLocation>
        <location evidence="1">Cell projection</location>
        <location evidence="1">Filopodium tip</location>
    </subcellularLocation>
    <subcellularLocation>
        <location evidence="1">Synapse</location>
    </subcellularLocation>
    <subcellularLocation>
        <location evidence="1">Postsynaptic cell membrane</location>
    </subcellularLocation>
    <subcellularLocation>
        <location evidence="1">Presynaptic cell membrane</location>
    </subcellularLocation>
    <subcellularLocation>
        <location evidence="1">Cell membrane</location>
    </subcellularLocation>
    <subcellularLocation>
        <location evidence="3">Cytoplasm</location>
        <location evidence="3">Stress granule</location>
    </subcellularLocation>
</comment>
<comment type="alternative products">
    <event type="alternative splicing"/>
    <isoform>
        <id>Q6GLC9-1</id>
        <name>1</name>
        <sequence type="displayed"/>
    </isoform>
    <isoform>
        <id>Q6GLC9-2</id>
        <name evidence="8">2</name>
        <sequence type="described" ref="VSP_052084"/>
    </isoform>
</comment>
<comment type="tissue specificity">
    <text evidence="8">Expressed ubiquitously throughout the embryo. Shows tissue-specific expression in adults, being abundant in most neurons of the central nervous system (CNS) and in all spermatogenic cells of the testis.</text>
</comment>
<comment type="domain">
    <text evidence="3">The C-terminal disordered region undergoes liquid-liquid phase separation (LLPS) for the formation of a membraneless compartment that concentrates mRNAs with associated regulatory factors.</text>
</comment>
<comment type="similarity">
    <text evidence="10">Belongs to the FMR1 family.</text>
</comment>
<keyword id="KW-0025">Alternative splicing</keyword>
<keyword id="KW-1003">Cell membrane</keyword>
<keyword id="KW-0966">Cell projection</keyword>
<keyword id="KW-0137">Centromere</keyword>
<keyword id="KW-0158">Chromosome</keyword>
<keyword id="KW-0963">Cytoplasm</keyword>
<keyword id="KW-0472">Membrane</keyword>
<keyword id="KW-0507">mRNA processing</keyword>
<keyword id="KW-0508">mRNA splicing</keyword>
<keyword id="KW-0509">mRNA transport</keyword>
<keyword id="KW-0524">Neurogenesis</keyword>
<keyword id="KW-0539">Nucleus</keyword>
<keyword id="KW-0628">Postsynaptic cell membrane</keyword>
<keyword id="KW-1185">Reference proteome</keyword>
<keyword id="KW-0677">Repeat</keyword>
<keyword id="KW-0678">Repressor</keyword>
<keyword id="KW-0687">Ribonucleoprotein</keyword>
<keyword id="KW-0694">RNA-binding</keyword>
<keyword id="KW-0770">Synapse</keyword>
<keyword id="KW-0771">Synaptosome</keyword>
<keyword id="KW-0810">Translation regulation</keyword>
<keyword id="KW-0813">Transport</keyword>
<evidence type="ECO:0000250" key="1">
    <source>
        <dbReference type="UniProtKB" id="P35922"/>
    </source>
</evidence>
<evidence type="ECO:0000250" key="2">
    <source>
        <dbReference type="UniProtKB" id="P51113"/>
    </source>
</evidence>
<evidence type="ECO:0000250" key="3">
    <source>
        <dbReference type="UniProtKB" id="Q06787"/>
    </source>
</evidence>
<evidence type="ECO:0000255" key="4"/>
<evidence type="ECO:0000255" key="5">
    <source>
        <dbReference type="PROSITE-ProRule" id="PRU00117"/>
    </source>
</evidence>
<evidence type="ECO:0000255" key="6">
    <source>
        <dbReference type="PROSITE-ProRule" id="PRU00973"/>
    </source>
</evidence>
<evidence type="ECO:0000256" key="7">
    <source>
        <dbReference type="SAM" id="MobiDB-lite"/>
    </source>
</evidence>
<evidence type="ECO:0000269" key="8">
    <source>
    </source>
</evidence>
<evidence type="ECO:0000303" key="9">
    <source>
    </source>
</evidence>
<evidence type="ECO:0000305" key="10"/>
<evidence type="ECO:0000312" key="11">
    <source>
        <dbReference type="EMBL" id="AAH74570.1"/>
    </source>
</evidence>
<name>FMR1_XENTR</name>
<protein>
    <recommendedName>
        <fullName evidence="3">Fragile X messenger ribonucleoprotein 1 homolog</fullName>
    </recommendedName>
    <alternativeName>
        <fullName evidence="10">XtFmrp</fullName>
    </alternativeName>
</protein>
<organism>
    <name type="scientific">Xenopus tropicalis</name>
    <name type="common">Western clawed frog</name>
    <name type="synonym">Silurana tropicalis</name>
    <dbReference type="NCBI Taxonomy" id="8364"/>
    <lineage>
        <taxon>Eukaryota</taxon>
        <taxon>Metazoa</taxon>
        <taxon>Chordata</taxon>
        <taxon>Craniata</taxon>
        <taxon>Vertebrata</taxon>
        <taxon>Euteleostomi</taxon>
        <taxon>Amphibia</taxon>
        <taxon>Batrachia</taxon>
        <taxon>Anura</taxon>
        <taxon>Pipoidea</taxon>
        <taxon>Pipidae</taxon>
        <taxon>Xenopodinae</taxon>
        <taxon>Xenopus</taxon>
        <taxon>Silurana</taxon>
    </lineage>
</organism>
<proteinExistence type="evidence at transcript level"/>
<feature type="chain" id="PRO_0000245323" description="Fragile X messenger ribonucleoprotein 1 homolog">
    <location>
        <begin position="1"/>
        <end position="590"/>
    </location>
</feature>
<feature type="domain" description="Agenet-like 1" evidence="6">
    <location>
        <begin position="4"/>
        <end position="50"/>
    </location>
</feature>
<feature type="domain" description="Agenet-like 2" evidence="6">
    <location>
        <begin position="63"/>
        <end position="115"/>
    </location>
</feature>
<feature type="domain" description="KH 1" evidence="5">
    <location>
        <begin position="222"/>
        <end position="251"/>
    </location>
</feature>
<feature type="domain" description="KH 2" evidence="5">
    <location>
        <begin position="285"/>
        <end position="314"/>
    </location>
</feature>
<feature type="region of interest" description="Disordered" evidence="7">
    <location>
        <begin position="376"/>
        <end position="438"/>
    </location>
</feature>
<feature type="region of interest" description="Disordered" evidence="7">
    <location>
        <begin position="453"/>
        <end position="590"/>
    </location>
</feature>
<feature type="region of interest" description="RNA-binding RGG-box" evidence="4">
    <location>
        <begin position="494"/>
        <end position="507"/>
    </location>
</feature>
<feature type="compositionally biased region" description="Basic and acidic residues" evidence="7">
    <location>
        <begin position="427"/>
        <end position="437"/>
    </location>
</feature>
<feature type="compositionally biased region" description="Gly residues" evidence="7">
    <location>
        <begin position="497"/>
        <end position="509"/>
    </location>
</feature>
<feature type="compositionally biased region" description="Basic and acidic residues" evidence="7">
    <location>
        <begin position="510"/>
        <end position="531"/>
    </location>
</feature>
<feature type="compositionally biased region" description="Basic and acidic residues" evidence="7">
    <location>
        <begin position="561"/>
        <end position="578"/>
    </location>
</feature>
<feature type="splice variant" id="VSP_052084" description="In isoform 2." evidence="9">
    <location>
        <begin position="425"/>
        <end position="450"/>
    </location>
</feature>
<reference evidence="10 11" key="1">
    <citation type="submission" date="2004-06" db="EMBL/GenBank/DDBJ databases">
        <authorList>
            <consortium name="NIH - Xenopus Gene Collection (XGC) project"/>
        </authorList>
    </citation>
    <scope>NUCLEOTIDE SEQUENCE [LARGE SCALE MRNA] (ISOFORM 1)</scope>
    <source>
        <tissue>Tail bud</tissue>
    </source>
</reference>
<reference evidence="10" key="2">
    <citation type="journal article" date="2005" name="Int. J. Dev. Biol.">
        <title>Two members of the Fxr gene family, Fmr1 and Fxr1, are differentially expressed in Xenopus tropicalis.</title>
        <authorList>
            <person name="Blonden L."/>
            <person name="van 't Padje S."/>
            <person name="Severijnen L.-A."/>
            <person name="Destree O."/>
            <person name="Oostra B.A."/>
            <person name="Willemsen R."/>
        </authorList>
    </citation>
    <scope>IDENTIFICATION [MRNA] (ISOFORM 2)</scope>
    <scope>SUBCELLULAR LOCATION</scope>
    <scope>TISSUE SPECIFICITY</scope>
</reference>
<gene>
    <name evidence="3 9" type="primary">fmr1</name>
</gene>
<dbReference type="EMBL" id="BC074570">
    <property type="protein sequence ID" value="AAH74570.1"/>
    <property type="molecule type" value="mRNA"/>
</dbReference>
<dbReference type="RefSeq" id="NP_001005454.1">
    <molecule id="Q6GLC9-1"/>
    <property type="nucleotide sequence ID" value="NM_001005454.1"/>
</dbReference>
<dbReference type="RefSeq" id="XP_012823648.2">
    <molecule id="Q6GLC9-2"/>
    <property type="nucleotide sequence ID" value="XM_012968194.3"/>
</dbReference>
<dbReference type="SMR" id="Q6GLC9"/>
<dbReference type="FunCoup" id="Q6GLC9">
    <property type="interactions" value="1669"/>
</dbReference>
<dbReference type="STRING" id="8364.ENSXETP00000015179"/>
<dbReference type="PaxDb" id="8364-ENSXETP00000042153"/>
<dbReference type="DNASU" id="448049"/>
<dbReference type="GeneID" id="448049"/>
<dbReference type="KEGG" id="xtr:448049"/>
<dbReference type="AGR" id="Xenbase:XB-GENE-977113"/>
<dbReference type="CTD" id="2332"/>
<dbReference type="Xenbase" id="XB-GENE-977113">
    <property type="gene designation" value="fmr1"/>
</dbReference>
<dbReference type="eggNOG" id="ENOG502QPKJ">
    <property type="taxonomic scope" value="Eukaryota"/>
</dbReference>
<dbReference type="HOGENOM" id="CLU_020699_4_0_1"/>
<dbReference type="InParanoid" id="Q6GLC9"/>
<dbReference type="OMA" id="DQQQRGY"/>
<dbReference type="OrthoDB" id="424249at2759"/>
<dbReference type="PhylomeDB" id="Q6GLC9"/>
<dbReference type="TreeFam" id="TF105427"/>
<dbReference type="Proteomes" id="UP000008143">
    <property type="component" value="Chromosome 8"/>
</dbReference>
<dbReference type="Bgee" id="ENSXETG00000019647">
    <property type="expression patterns" value="Expressed in brain and 12 other cell types or tissues"/>
</dbReference>
<dbReference type="GO" id="GO:0030424">
    <property type="term" value="C:axon"/>
    <property type="evidence" value="ECO:0000250"/>
    <property type="project" value="UniProtKB"/>
</dbReference>
<dbReference type="GO" id="GO:0043679">
    <property type="term" value="C:axon terminus"/>
    <property type="evidence" value="ECO:0000250"/>
    <property type="project" value="UniProtKB"/>
</dbReference>
<dbReference type="GO" id="GO:0042995">
    <property type="term" value="C:cell projection"/>
    <property type="evidence" value="ECO:0000250"/>
    <property type="project" value="UniProtKB"/>
</dbReference>
<dbReference type="GO" id="GO:0010369">
    <property type="term" value="C:chromocenter"/>
    <property type="evidence" value="ECO:0000250"/>
    <property type="project" value="UniProtKB"/>
</dbReference>
<dbReference type="GO" id="GO:0005694">
    <property type="term" value="C:chromosome"/>
    <property type="evidence" value="ECO:0000250"/>
    <property type="project" value="UniProtKB"/>
</dbReference>
<dbReference type="GO" id="GO:0000775">
    <property type="term" value="C:chromosome, centromeric region"/>
    <property type="evidence" value="ECO:0007669"/>
    <property type="project" value="UniProtKB-SubCell"/>
</dbReference>
<dbReference type="GO" id="GO:0005737">
    <property type="term" value="C:cytoplasm"/>
    <property type="evidence" value="ECO:0000314"/>
    <property type="project" value="UniProtKB"/>
</dbReference>
<dbReference type="GO" id="GO:0036464">
    <property type="term" value="C:cytoplasmic ribonucleoprotein granule"/>
    <property type="evidence" value="ECO:0000250"/>
    <property type="project" value="UniProtKB"/>
</dbReference>
<dbReference type="GO" id="GO:0010494">
    <property type="term" value="C:cytoplasmic stress granule"/>
    <property type="evidence" value="ECO:0000250"/>
    <property type="project" value="UniProtKB"/>
</dbReference>
<dbReference type="GO" id="GO:0030425">
    <property type="term" value="C:dendrite"/>
    <property type="evidence" value="ECO:0000250"/>
    <property type="project" value="UniProtKB"/>
</dbReference>
<dbReference type="GO" id="GO:1902737">
    <property type="term" value="C:dendritic filopodium"/>
    <property type="evidence" value="ECO:0000250"/>
    <property type="project" value="UniProtKB"/>
</dbReference>
<dbReference type="GO" id="GO:0043197">
    <property type="term" value="C:dendritic spine"/>
    <property type="evidence" value="ECO:0000250"/>
    <property type="project" value="UniProtKB"/>
</dbReference>
<dbReference type="GO" id="GO:0032433">
    <property type="term" value="C:filopodium tip"/>
    <property type="evidence" value="ECO:0000250"/>
    <property type="project" value="UniProtKB"/>
</dbReference>
<dbReference type="GO" id="GO:0097386">
    <property type="term" value="C:glial cell projection"/>
    <property type="evidence" value="ECO:0000250"/>
    <property type="project" value="UniProtKB"/>
</dbReference>
<dbReference type="GO" id="GO:0030426">
    <property type="term" value="C:growth cone"/>
    <property type="evidence" value="ECO:0000250"/>
    <property type="project" value="UniProtKB"/>
</dbReference>
<dbReference type="GO" id="GO:1990812">
    <property type="term" value="C:growth cone filopodium"/>
    <property type="evidence" value="ECO:0000250"/>
    <property type="project" value="UniProtKB"/>
</dbReference>
<dbReference type="GO" id="GO:0043232">
    <property type="term" value="C:intracellular membraneless organelle"/>
    <property type="evidence" value="ECO:0000250"/>
    <property type="project" value="UniProtKB"/>
</dbReference>
<dbReference type="GO" id="GO:0043005">
    <property type="term" value="C:neuron projection"/>
    <property type="evidence" value="ECO:0000250"/>
    <property type="project" value="UniProtKB"/>
</dbReference>
<dbReference type="GO" id="GO:0071598">
    <property type="term" value="C:neuronal ribonucleoprotein granule"/>
    <property type="evidence" value="ECO:0000250"/>
    <property type="project" value="UniProtKB"/>
</dbReference>
<dbReference type="GO" id="GO:0005730">
    <property type="term" value="C:nucleolus"/>
    <property type="evidence" value="ECO:0000250"/>
    <property type="project" value="UniProtKB"/>
</dbReference>
<dbReference type="GO" id="GO:0005654">
    <property type="term" value="C:nucleoplasm"/>
    <property type="evidence" value="ECO:0000250"/>
    <property type="project" value="UniProtKB"/>
</dbReference>
<dbReference type="GO" id="GO:0005634">
    <property type="term" value="C:nucleus"/>
    <property type="evidence" value="ECO:0000314"/>
    <property type="project" value="UniProtKB"/>
</dbReference>
<dbReference type="GO" id="GO:0043204">
    <property type="term" value="C:perikaryon"/>
    <property type="evidence" value="ECO:0000250"/>
    <property type="project" value="UniProtKB"/>
</dbReference>
<dbReference type="GO" id="GO:0048471">
    <property type="term" value="C:perinuclear region of cytoplasm"/>
    <property type="evidence" value="ECO:0000250"/>
    <property type="project" value="UniProtKB"/>
</dbReference>
<dbReference type="GO" id="GO:0098794">
    <property type="term" value="C:postsynapse"/>
    <property type="evidence" value="ECO:0000250"/>
    <property type="project" value="UniProtKB"/>
</dbReference>
<dbReference type="GO" id="GO:0014069">
    <property type="term" value="C:postsynaptic density"/>
    <property type="evidence" value="ECO:0000250"/>
    <property type="project" value="UniProtKB"/>
</dbReference>
<dbReference type="GO" id="GO:0045211">
    <property type="term" value="C:postsynaptic membrane"/>
    <property type="evidence" value="ECO:0007669"/>
    <property type="project" value="UniProtKB-SubCell"/>
</dbReference>
<dbReference type="GO" id="GO:0098793">
    <property type="term" value="C:presynapse"/>
    <property type="evidence" value="ECO:0000250"/>
    <property type="project" value="UniProtKB"/>
</dbReference>
<dbReference type="GO" id="GO:0042734">
    <property type="term" value="C:presynaptic membrane"/>
    <property type="evidence" value="ECO:0007669"/>
    <property type="project" value="UniProtKB-SubCell"/>
</dbReference>
<dbReference type="GO" id="GO:1990904">
    <property type="term" value="C:ribonucleoprotein complex"/>
    <property type="evidence" value="ECO:0007669"/>
    <property type="project" value="UniProtKB-KW"/>
</dbReference>
<dbReference type="GO" id="GO:0045202">
    <property type="term" value="C:synapse"/>
    <property type="evidence" value="ECO:0000250"/>
    <property type="project" value="UniProtKB"/>
</dbReference>
<dbReference type="GO" id="GO:0003682">
    <property type="term" value="F:chromatin binding"/>
    <property type="evidence" value="ECO:0000250"/>
    <property type="project" value="UniProtKB"/>
</dbReference>
<dbReference type="GO" id="GO:0070840">
    <property type="term" value="F:dynein complex binding"/>
    <property type="evidence" value="ECO:0000250"/>
    <property type="project" value="UniProtKB"/>
</dbReference>
<dbReference type="GO" id="GO:0002151">
    <property type="term" value="F:G-quadruplex RNA binding"/>
    <property type="evidence" value="ECO:0000250"/>
    <property type="project" value="UniProtKB"/>
</dbReference>
<dbReference type="GO" id="GO:0140006">
    <property type="term" value="F:histone H3 reader activity"/>
    <property type="evidence" value="ECO:0000250"/>
    <property type="project" value="UniProtKB"/>
</dbReference>
<dbReference type="GO" id="GO:0008017">
    <property type="term" value="F:microtubule binding"/>
    <property type="evidence" value="ECO:0000250"/>
    <property type="project" value="UniProtKB"/>
</dbReference>
<dbReference type="GO" id="GO:0035198">
    <property type="term" value="F:miRNA binding"/>
    <property type="evidence" value="ECO:0000250"/>
    <property type="project" value="UniProtKB"/>
</dbReference>
<dbReference type="GO" id="GO:0140693">
    <property type="term" value="F:molecular condensate scaffold activity"/>
    <property type="evidence" value="ECO:0000250"/>
    <property type="project" value="UniProtKB"/>
</dbReference>
<dbReference type="GO" id="GO:0003730">
    <property type="term" value="F:mRNA 3'-UTR binding"/>
    <property type="evidence" value="ECO:0000250"/>
    <property type="project" value="UniProtKB"/>
</dbReference>
<dbReference type="GO" id="GO:0048027">
    <property type="term" value="F:mRNA 5'-UTR binding"/>
    <property type="evidence" value="ECO:0000250"/>
    <property type="project" value="UniProtKB"/>
</dbReference>
<dbReference type="GO" id="GO:0003729">
    <property type="term" value="F:mRNA binding"/>
    <property type="evidence" value="ECO:0000250"/>
    <property type="project" value="UniProtKB"/>
</dbReference>
<dbReference type="GO" id="GO:1990247">
    <property type="term" value="F:N6-methyladenosine-containing RNA reader activity"/>
    <property type="evidence" value="ECO:0000250"/>
    <property type="project" value="UniProtKB"/>
</dbReference>
<dbReference type="GO" id="GO:0034046">
    <property type="term" value="F:poly(G) binding"/>
    <property type="evidence" value="ECO:0000250"/>
    <property type="project" value="UniProtKB"/>
</dbReference>
<dbReference type="GO" id="GO:0008266">
    <property type="term" value="F:poly(U) RNA binding"/>
    <property type="evidence" value="ECO:0000250"/>
    <property type="project" value="UniProtKB"/>
</dbReference>
<dbReference type="GO" id="GO:0046982">
    <property type="term" value="F:protein heterodimerization activity"/>
    <property type="evidence" value="ECO:0000250"/>
    <property type="project" value="UniProtKB"/>
</dbReference>
<dbReference type="GO" id="GO:0042803">
    <property type="term" value="F:protein homodimerization activity"/>
    <property type="evidence" value="ECO:0000250"/>
    <property type="project" value="UniProtKB"/>
</dbReference>
<dbReference type="GO" id="GO:0003723">
    <property type="term" value="F:RNA binding"/>
    <property type="evidence" value="ECO:0000250"/>
    <property type="project" value="UniProtKB"/>
</dbReference>
<dbReference type="GO" id="GO:0035613">
    <property type="term" value="F:RNA stem-loop binding"/>
    <property type="evidence" value="ECO:0000250"/>
    <property type="project" value="UniProtKB"/>
</dbReference>
<dbReference type="GO" id="GO:0033592">
    <property type="term" value="F:RNA strand annealing activity"/>
    <property type="evidence" value="ECO:0000250"/>
    <property type="project" value="UniProtKB"/>
</dbReference>
<dbReference type="GO" id="GO:1990825">
    <property type="term" value="F:sequence-specific mRNA binding"/>
    <property type="evidence" value="ECO:0000250"/>
    <property type="project" value="UniProtKB"/>
</dbReference>
<dbReference type="GO" id="GO:0035197">
    <property type="term" value="F:siRNA binding"/>
    <property type="evidence" value="ECO:0000250"/>
    <property type="project" value="UniProtKB"/>
</dbReference>
<dbReference type="GO" id="GO:0030371">
    <property type="term" value="F:translation repressor activity"/>
    <property type="evidence" value="ECO:0000250"/>
    <property type="project" value="UniProtKB"/>
</dbReference>
<dbReference type="GO" id="GO:0006281">
    <property type="term" value="P:DNA repair"/>
    <property type="evidence" value="ECO:0000250"/>
    <property type="project" value="UniProtKB"/>
</dbReference>
<dbReference type="GO" id="GO:0007215">
    <property type="term" value="P:glutamate receptor signaling pathway"/>
    <property type="evidence" value="ECO:0000250"/>
    <property type="project" value="UniProtKB"/>
</dbReference>
<dbReference type="GO" id="GO:0140694">
    <property type="term" value="P:membraneless organelle assembly"/>
    <property type="evidence" value="ECO:0000250"/>
    <property type="project" value="UniProtKB"/>
</dbReference>
<dbReference type="GO" id="GO:0035195">
    <property type="term" value="P:miRNA-mediated post-transcriptional gene silencing"/>
    <property type="evidence" value="ECO:0000250"/>
    <property type="project" value="UniProtKB"/>
</dbReference>
<dbReference type="GO" id="GO:0006406">
    <property type="term" value="P:mRNA export from nucleus"/>
    <property type="evidence" value="ECO:0000250"/>
    <property type="project" value="UniProtKB"/>
</dbReference>
<dbReference type="GO" id="GO:0006397">
    <property type="term" value="P:mRNA processing"/>
    <property type="evidence" value="ECO:0007669"/>
    <property type="project" value="UniProtKB-KW"/>
</dbReference>
<dbReference type="GO" id="GO:0051028">
    <property type="term" value="P:mRNA transport"/>
    <property type="evidence" value="ECO:0000250"/>
    <property type="project" value="UniProtKB"/>
</dbReference>
<dbReference type="GO" id="GO:2000766">
    <property type="term" value="P:negative regulation of cytoplasmic translation"/>
    <property type="evidence" value="ECO:0000250"/>
    <property type="project" value="UniProtKB"/>
</dbReference>
<dbReference type="GO" id="GO:0010629">
    <property type="term" value="P:negative regulation of gene expression"/>
    <property type="evidence" value="ECO:0000250"/>
    <property type="project" value="UniProtKB"/>
</dbReference>
<dbReference type="GO" id="GO:1900453">
    <property type="term" value="P:negative regulation of long-term synaptic depression"/>
    <property type="evidence" value="ECO:0000250"/>
    <property type="project" value="UniProtKB"/>
</dbReference>
<dbReference type="GO" id="GO:0060965">
    <property type="term" value="P:negative regulation of miRNA-mediated gene silencing"/>
    <property type="evidence" value="ECO:0000250"/>
    <property type="project" value="UniProtKB"/>
</dbReference>
<dbReference type="GO" id="GO:2000301">
    <property type="term" value="P:negative regulation of synaptic vesicle exocytosis"/>
    <property type="evidence" value="ECO:0000250"/>
    <property type="project" value="UniProtKB"/>
</dbReference>
<dbReference type="GO" id="GO:0017148">
    <property type="term" value="P:negative regulation of translation"/>
    <property type="evidence" value="ECO:0000250"/>
    <property type="project" value="UniProtKB"/>
</dbReference>
<dbReference type="GO" id="GO:0045947">
    <property type="term" value="P:negative regulation of translational initiation"/>
    <property type="evidence" value="ECO:0000250"/>
    <property type="project" value="UniProtKB"/>
</dbReference>
<dbReference type="GO" id="GO:1901386">
    <property type="term" value="P:negative regulation of voltage-gated calcium channel activity"/>
    <property type="evidence" value="ECO:0000250"/>
    <property type="project" value="UniProtKB"/>
</dbReference>
<dbReference type="GO" id="GO:0007399">
    <property type="term" value="P:nervous system development"/>
    <property type="evidence" value="ECO:0007669"/>
    <property type="project" value="UniProtKB-KW"/>
</dbReference>
<dbReference type="GO" id="GO:0060999">
    <property type="term" value="P:positive regulation of dendritic spine development"/>
    <property type="evidence" value="ECO:0000250"/>
    <property type="project" value="UniProtKB"/>
</dbReference>
<dbReference type="GO" id="GO:0051491">
    <property type="term" value="P:positive regulation of filopodium assembly"/>
    <property type="evidence" value="ECO:0000250"/>
    <property type="project" value="UniProtKB"/>
</dbReference>
<dbReference type="GO" id="GO:2000637">
    <property type="term" value="P:positive regulation of miRNA-mediated gene silencing"/>
    <property type="evidence" value="ECO:0000250"/>
    <property type="project" value="UniProtKB"/>
</dbReference>
<dbReference type="GO" id="GO:1901800">
    <property type="term" value="P:positive regulation of proteasomal protein catabolic process"/>
    <property type="evidence" value="ECO:0000250"/>
    <property type="project" value="UniProtKB"/>
</dbReference>
<dbReference type="GO" id="GO:0002092">
    <property type="term" value="P:positive regulation of receptor internalization"/>
    <property type="evidence" value="ECO:0000250"/>
    <property type="project" value="UniProtKB"/>
</dbReference>
<dbReference type="GO" id="GO:0045727">
    <property type="term" value="P:positive regulation of translation"/>
    <property type="evidence" value="ECO:0000250"/>
    <property type="project" value="UniProtKB"/>
</dbReference>
<dbReference type="GO" id="GO:0000381">
    <property type="term" value="P:regulation of alternative mRNA splicing, via spliceosome"/>
    <property type="evidence" value="ECO:0000250"/>
    <property type="project" value="UniProtKB"/>
</dbReference>
<dbReference type="GO" id="GO:0060998">
    <property type="term" value="P:regulation of dendritic spine development"/>
    <property type="evidence" value="ECO:0000250"/>
    <property type="project" value="UniProtKB"/>
</dbReference>
<dbReference type="GO" id="GO:0051489">
    <property type="term" value="P:regulation of filopodium assembly"/>
    <property type="evidence" value="ECO:0000250"/>
    <property type="project" value="UniProtKB"/>
</dbReference>
<dbReference type="GO" id="GO:0043488">
    <property type="term" value="P:regulation of mRNA stability"/>
    <property type="evidence" value="ECO:0000250"/>
    <property type="project" value="UniProtKB"/>
</dbReference>
<dbReference type="GO" id="GO:0098908">
    <property type="term" value="P:regulation of neuronal action potential"/>
    <property type="evidence" value="ECO:0000250"/>
    <property type="project" value="UniProtKB"/>
</dbReference>
<dbReference type="GO" id="GO:0046928">
    <property type="term" value="P:regulation of neurotransmitter secretion"/>
    <property type="evidence" value="ECO:0000250"/>
    <property type="project" value="UniProtKB"/>
</dbReference>
<dbReference type="GO" id="GO:0008380">
    <property type="term" value="P:RNA splicing"/>
    <property type="evidence" value="ECO:0007669"/>
    <property type="project" value="UniProtKB-KW"/>
</dbReference>
<dbReference type="GO" id="GO:0060538">
    <property type="term" value="P:skeletal muscle organ development"/>
    <property type="evidence" value="ECO:0000250"/>
    <property type="project" value="UniProtKB"/>
</dbReference>
<dbReference type="GO" id="GO:0034063">
    <property type="term" value="P:stress granule assembly"/>
    <property type="evidence" value="ECO:0000250"/>
    <property type="project" value="UniProtKB"/>
</dbReference>
<dbReference type="CDD" id="cd22506">
    <property type="entry name" value="KH_I_FMR1_rpt1"/>
    <property type="match status" value="1"/>
</dbReference>
<dbReference type="CDD" id="cd22509">
    <property type="entry name" value="KH_I_FMR1_rpt2"/>
    <property type="match status" value="1"/>
</dbReference>
<dbReference type="CDD" id="cd22512">
    <property type="entry name" value="KH_I_FMR1_rpt3"/>
    <property type="match status" value="1"/>
</dbReference>
<dbReference type="CDD" id="cd20471">
    <property type="entry name" value="Tudor_Agenet_FMR1_rpt1"/>
    <property type="match status" value="1"/>
</dbReference>
<dbReference type="CDD" id="cd20474">
    <property type="entry name" value="Tudor_Agenet_FMR1_rpt2"/>
    <property type="match status" value="1"/>
</dbReference>
<dbReference type="FunFam" id="2.30.30.140:FF:000001">
    <property type="entry name" value="Fragile X mental retardation 1, isoform CRA_e"/>
    <property type="match status" value="1"/>
</dbReference>
<dbReference type="FunFam" id="2.30.30.140:FF:000002">
    <property type="entry name" value="Fragile X mental retardation 1, isoform CRA_e"/>
    <property type="match status" value="1"/>
</dbReference>
<dbReference type="FunFam" id="3.30.1370.10:FF:000004">
    <property type="entry name" value="Fragile X mental retardation 1, isoform CRA_e"/>
    <property type="match status" value="1"/>
</dbReference>
<dbReference type="FunFam" id="3.30.1370.10:FF:000054">
    <property type="entry name" value="Fragile X mental retardation protein 1"/>
    <property type="match status" value="1"/>
</dbReference>
<dbReference type="Gene3D" id="2.30.30.140">
    <property type="match status" value="2"/>
</dbReference>
<dbReference type="Gene3D" id="3.30.1370.10">
    <property type="entry name" value="K Homology domain, type 1"/>
    <property type="match status" value="2"/>
</dbReference>
<dbReference type="InterPro" id="IPR008395">
    <property type="entry name" value="Agenet-like_dom"/>
</dbReference>
<dbReference type="InterPro" id="IPR040148">
    <property type="entry name" value="FMR1"/>
</dbReference>
<dbReference type="InterPro" id="IPR022034">
    <property type="entry name" value="FMR1-like_C_core"/>
</dbReference>
<dbReference type="InterPro" id="IPR032196">
    <property type="entry name" value="FMR1_C2"/>
</dbReference>
<dbReference type="InterPro" id="IPR040472">
    <property type="entry name" value="FMRP_KH0"/>
</dbReference>
<dbReference type="InterPro" id="IPR004087">
    <property type="entry name" value="KH_dom"/>
</dbReference>
<dbReference type="InterPro" id="IPR004088">
    <property type="entry name" value="KH_dom_type_1"/>
</dbReference>
<dbReference type="InterPro" id="IPR036612">
    <property type="entry name" value="KH_dom_type_1_sf"/>
</dbReference>
<dbReference type="InterPro" id="IPR047438">
    <property type="entry name" value="KH_I_FMR1_rpt1"/>
</dbReference>
<dbReference type="InterPro" id="IPR047440">
    <property type="entry name" value="KH_I_FMR1_rpt2"/>
</dbReference>
<dbReference type="InterPro" id="IPR047431">
    <property type="entry name" value="Tudor_Agenet_FMR1_rpt1"/>
</dbReference>
<dbReference type="InterPro" id="IPR047436">
    <property type="entry name" value="Tudor_Agenet_FMR1_rpt2"/>
</dbReference>
<dbReference type="InterPro" id="IPR041560">
    <property type="entry name" value="Tudor_FRM1"/>
</dbReference>
<dbReference type="PANTHER" id="PTHR10603">
    <property type="entry name" value="FRAGILE X MENTAL RETARDATION SYNDROME-RELATED PROTEIN"/>
    <property type="match status" value="1"/>
</dbReference>
<dbReference type="PANTHER" id="PTHR10603:SF4">
    <property type="entry name" value="FRAGILE X MESSENGER RIBONUCLEOPROTEIN 1"/>
    <property type="match status" value="1"/>
</dbReference>
<dbReference type="Pfam" id="PF05641">
    <property type="entry name" value="Agenet"/>
    <property type="match status" value="1"/>
</dbReference>
<dbReference type="Pfam" id="PF16098">
    <property type="entry name" value="FXMR_C2"/>
    <property type="match status" value="1"/>
</dbReference>
<dbReference type="Pfam" id="PF12235">
    <property type="entry name" value="FXMRP1_C_core"/>
    <property type="match status" value="2"/>
</dbReference>
<dbReference type="Pfam" id="PF00013">
    <property type="entry name" value="KH_1"/>
    <property type="match status" value="2"/>
</dbReference>
<dbReference type="Pfam" id="PF17904">
    <property type="entry name" value="KH_9"/>
    <property type="match status" value="1"/>
</dbReference>
<dbReference type="Pfam" id="PF18336">
    <property type="entry name" value="Tudor_FRX1"/>
    <property type="match status" value="1"/>
</dbReference>
<dbReference type="SMART" id="SM00322">
    <property type="entry name" value="KH"/>
    <property type="match status" value="2"/>
</dbReference>
<dbReference type="SUPFAM" id="SSF54791">
    <property type="entry name" value="Eukaryotic type KH-domain (KH-domain type I)"/>
    <property type="match status" value="2"/>
</dbReference>
<dbReference type="PROSITE" id="PS51641">
    <property type="entry name" value="AGENET_LIKE"/>
    <property type="match status" value="2"/>
</dbReference>
<dbReference type="PROSITE" id="PS50084">
    <property type="entry name" value="KH_TYPE_1"/>
    <property type="match status" value="2"/>
</dbReference>